<sequence length="220" mass="22070">MINVQAKPAAAASLAAIAIAFLAGCSSTKPVSQDTSPKPATSPAAPVTTAAMADPAADLIGRGCAQYAAQNPTGPGSVAGMAQDPVATAASNNPMLSTLTSALSGKLNPDVNLVDTLNGGEYTVFAPTNAAFDKLPAATIDQLKTDAKLLSSILTYHVIAGQASPSRIDGTHQTLQGADLTVIGARDDLMVNNAGLVCGGVHTANATVYMIDTVLMPPAQ</sequence>
<name>MP83_MYCBO</name>
<organism>
    <name type="scientific">Mycobacterium bovis (strain ATCC BAA-935 / AF2122/97)</name>
    <dbReference type="NCBI Taxonomy" id="233413"/>
    <lineage>
        <taxon>Bacteria</taxon>
        <taxon>Bacillati</taxon>
        <taxon>Actinomycetota</taxon>
        <taxon>Actinomycetes</taxon>
        <taxon>Mycobacteriales</taxon>
        <taxon>Mycobacteriaceae</taxon>
        <taxon>Mycobacterium</taxon>
        <taxon>Mycobacterium tuberculosis complex</taxon>
    </lineage>
</organism>
<accession>P0CAX7</accession>
<accession>A0A1R3Y2F5</accession>
<accession>P0A671</accession>
<accession>P71493</accession>
<accession>Q10790</accession>
<accession>X2BM94</accession>
<reference key="1">
    <citation type="journal article" date="1996" name="Scand. J. Immunol.">
        <title>Cloning and sequencing of an MPB70 homologue corresponding to MPB83 from Mycobacterium bovis BCG.</title>
        <authorList>
            <person name="Matsuo T."/>
            <person name="Matsuo H."/>
            <person name="Ohara N."/>
            <person name="Matsumoto S."/>
            <person name="Kitaura H."/>
            <person name="Mizuno A."/>
            <person name="Yamada T."/>
        </authorList>
    </citation>
    <scope>NUCLEOTIDE SEQUENCE [GENOMIC DNA]</scope>
    <source>
        <strain>BCG / Tokyo</strain>
    </source>
</reference>
<reference key="2">
    <citation type="journal article" date="2003" name="Proc. Natl. Acad. Sci. U.S.A.">
        <title>The complete genome sequence of Mycobacterium bovis.</title>
        <authorList>
            <person name="Garnier T."/>
            <person name="Eiglmeier K."/>
            <person name="Camus J.-C."/>
            <person name="Medina N."/>
            <person name="Mansoor H."/>
            <person name="Pryor M."/>
            <person name="Duthoy S."/>
            <person name="Grondin S."/>
            <person name="Lacroix C."/>
            <person name="Monsempe C."/>
            <person name="Simon S."/>
            <person name="Harris B."/>
            <person name="Atkin R."/>
            <person name="Doggett J."/>
            <person name="Mayes R."/>
            <person name="Keating L."/>
            <person name="Wheeler P.R."/>
            <person name="Parkhill J."/>
            <person name="Barrell B.G."/>
            <person name="Cole S.T."/>
            <person name="Gordon S.V."/>
            <person name="Hewinson R.G."/>
        </authorList>
    </citation>
    <scope>NUCLEOTIDE SEQUENCE [LARGE SCALE GENOMIC DNA]</scope>
    <source>
        <strain>ATCC BAA-935 / AF2122/97</strain>
    </source>
</reference>
<reference key="3">
    <citation type="journal article" date="2017" name="Genome Announc.">
        <title>Updated reference genome sequence and annotation of Mycobacterium bovis AF2122/97.</title>
        <authorList>
            <person name="Malone K.M."/>
            <person name="Farrell D."/>
            <person name="Stuber T.P."/>
            <person name="Schubert O.T."/>
            <person name="Aebersold R."/>
            <person name="Robbe-Austerman S."/>
            <person name="Gordon S.V."/>
        </authorList>
    </citation>
    <scope>NUCLEOTIDE SEQUENCE [LARGE SCALE GENOMIC DNA]</scope>
    <scope>GENOME REANNOTATION</scope>
    <source>
        <strain>ATCC BAA-935 / AF2122/97</strain>
    </source>
</reference>
<reference key="4">
    <citation type="journal article" date="2003" name="J. Biol. Chem.">
        <title>The MPB83 antigen from Mycobacterium bovis contains O-linked mannose and (1--&gt;3)-mannobiose moieties.</title>
        <authorList>
            <person name="Michell S.L."/>
            <person name="Whelan A.O."/>
            <person name="Wheeler P.R."/>
            <person name="Panico M."/>
            <person name="Easton R.L."/>
            <person name="Etienne A.T."/>
            <person name="Haslam S.M."/>
            <person name="Dell A."/>
            <person name="Morris H.R."/>
            <person name="Reason A.J."/>
            <person name="Herrmann J.L."/>
            <person name="Young D.B."/>
            <person name="Hewinson R.G."/>
        </authorList>
    </citation>
    <scope>PROTEIN SEQUENCE OF 28-45 AND 48-62</scope>
    <scope>SUBCELLULAR LOCATION</scope>
    <scope>GLYCOSYLATION</scope>
    <scope>MASS SPECTROMETRY</scope>
    <scope>MUTAGENESIS OF 48-THR-THR-49</scope>
    <source>
        <strain>AN-5</strain>
    </source>
</reference>
<reference key="5">
    <citation type="journal article" date="2010" name="Biochem. Biophys. Res. Commun.">
        <title>Non-acylated Mycobacterium bovis glycoprotein MPB83 binds to TLR1/2 and stimulates production of matrix metalloproteinase 9.</title>
        <authorList>
            <person name="Chambers M.A."/>
            <person name="Whelan A.O."/>
            <person name="Spallek R."/>
            <person name="Singh M."/>
            <person name="Coddeville B."/>
            <person name="Guerardel Y."/>
            <person name="Elass E."/>
        </authorList>
    </citation>
    <scope>FUNCTION</scope>
    <scope>INTERACTION WITH HOST TLR2</scope>
    <scope>SUBCELLULAR LOCATION</scope>
</reference>
<protein>
    <recommendedName>
        <fullName>Cell surface glycolipoprotein MPB83</fullName>
    </recommendedName>
    <alternativeName>
        <fullName>Lipoprotein p23</fullName>
    </alternativeName>
</protein>
<proteinExistence type="evidence at protein level"/>
<feature type="signal peptide" evidence="5">
    <location>
        <begin position="1"/>
        <end position="24"/>
    </location>
</feature>
<feature type="chain" id="PRO_0000008787" description="Cell surface glycolipoprotein MPB83">
    <location>
        <begin position="25"/>
        <end position="220"/>
    </location>
</feature>
<feature type="domain" description="FAS1" evidence="2">
    <location>
        <begin position="83"/>
        <end position="215"/>
    </location>
</feature>
<feature type="lipid moiety-binding region" description="N-palmitoyl cysteine" evidence="5">
    <location>
        <position position="25"/>
    </location>
</feature>
<feature type="lipid moiety-binding region" description="S-diacylglycerol cysteine" evidence="5">
    <location>
        <position position="25"/>
    </location>
</feature>
<feature type="glycosylation site" description="O-linked (Man...) threonine" evidence="3">
    <location>
        <position position="48"/>
    </location>
</feature>
<feature type="glycosylation site" description="O-linked (Man...) threonine" evidence="3">
    <location>
        <position position="49"/>
    </location>
</feature>
<feature type="mutagenesis site" description="No longer binds concanavalin A upon expression of residues 1-63 in M.smegmatis." evidence="3">
    <original>TT</original>
    <variation>VV</variation>
    <location>
        <begin position="48"/>
        <end position="49"/>
    </location>
</feature>
<feature type="sequence conflict" description="In Ref. 4; AA sequence." evidence="5" ref="4">
    <original>S</original>
    <variation>D</variation>
    <location>
        <position position="36"/>
    </location>
</feature>
<gene>
    <name type="primary">mpb83</name>
    <name type="ordered locus">BQ2027_MB2898</name>
</gene>
<comment type="function">
    <text evidence="4">Induces expression of human (host) matrix metalloproteinase-9 (MMP9) in a TLR1/TLR2-dependent fashion; the acylated 20 first mature residues (residues 25-40) induce the most expression, but whole recombinant protein (non-acylated and non-glycosylated), and mannosylated but not acylated protein (residues 26-220) also induce expression (PubMed:20800577).</text>
</comment>
<comment type="subunit">
    <text evidence="4">Interacts with host (human) TLR2 (PubMed:20800577).</text>
</comment>
<comment type="subcellular location">
    <subcellularLocation>
        <location evidence="5">Cell membrane</location>
        <topology evidence="5">Lipid-anchor</topology>
    </subcellularLocation>
    <subcellularLocation>
        <location evidence="1">Secreted</location>
        <location evidence="1">Cell wall</location>
    </subcellularLocation>
    <subcellularLocation>
        <location evidence="3 4">Secreted</location>
    </subcellularLocation>
</comment>
<comment type="PTM">
    <text evidence="3">O-glycosylated. Contains 0-3 mannose residues attached to residues 48-49 in various configurations; the dominant glycoform is Thr-48(Man)/Thr-49(Man2) with an unusual Man(1-&gt;3)Man linkage, but Thr48(Man3)/Thr49(Man0) through to Thr48(Man0/)Thr49(Man3) are also seen (PubMed:12517764).</text>
</comment>
<comment type="PTM">
    <text evidence="3">When isolated from culture filtrate runs as 25 and 23 kDa proteins; the larger protein is much less abundant, mostly associated with the cell and starts at residue 28, the shorter is more abundant and starts at residue 48 (PubMed:12517764).</text>
</comment>
<comment type="mass spectrometry" mass="18048.0" error="2.0" method="Electrospray" evidence="3">
    <text>For the shorter more abundant form, is tri-hexosylated.</text>
</comment>
<comment type="mass spectrometry" mass="17560.0" error="2.0" method="Electrospray" evidence="3">
    <text>For the shorter more abundant form, chemically deglycosylated.</text>
</comment>
<keyword id="KW-1003">Cell membrane</keyword>
<keyword id="KW-0134">Cell wall</keyword>
<keyword id="KW-0903">Direct protein sequencing</keyword>
<keyword id="KW-0325">Glycoprotein</keyword>
<keyword id="KW-0449">Lipoprotein</keyword>
<keyword id="KW-0472">Membrane</keyword>
<keyword id="KW-0564">Palmitate</keyword>
<keyword id="KW-1185">Reference proteome</keyword>
<keyword id="KW-0964">Secreted</keyword>
<keyword id="KW-0732">Signal</keyword>
<evidence type="ECO:0000250" key="1">
    <source>
        <dbReference type="UniProtKB" id="P9WNF3"/>
    </source>
</evidence>
<evidence type="ECO:0000255" key="2">
    <source>
        <dbReference type="PROSITE-ProRule" id="PRU00082"/>
    </source>
</evidence>
<evidence type="ECO:0000269" key="3">
    <source>
    </source>
</evidence>
<evidence type="ECO:0000269" key="4">
    <source>
    </source>
</evidence>
<evidence type="ECO:0000305" key="5"/>
<dbReference type="EMBL" id="D64165">
    <property type="protein sequence ID" value="BAA11027.1"/>
    <property type="molecule type" value="Genomic_DNA"/>
</dbReference>
<dbReference type="EMBL" id="LT708304">
    <property type="protein sequence ID" value="SIU01519.1"/>
    <property type="molecule type" value="Genomic_DNA"/>
</dbReference>
<dbReference type="RefSeq" id="NP_856543.1">
    <property type="nucleotide sequence ID" value="NC_002945.3"/>
</dbReference>
<dbReference type="SMR" id="P0CAX7"/>
<dbReference type="GlyCosmos" id="P0CAX7">
    <property type="glycosylation" value="2 sites, No reported glycans"/>
</dbReference>
<dbReference type="iPTMnet" id="P0CAX7"/>
<dbReference type="KEGG" id="mbo:BQ2027_MB2898"/>
<dbReference type="PATRIC" id="fig|233413.5.peg.3180"/>
<dbReference type="Proteomes" id="UP000001419">
    <property type="component" value="Chromosome"/>
</dbReference>
<dbReference type="GO" id="GO:0031012">
    <property type="term" value="C:extracellular matrix"/>
    <property type="evidence" value="ECO:0007669"/>
    <property type="project" value="TreeGrafter"/>
</dbReference>
<dbReference type="GO" id="GO:0005615">
    <property type="term" value="C:extracellular space"/>
    <property type="evidence" value="ECO:0007669"/>
    <property type="project" value="TreeGrafter"/>
</dbReference>
<dbReference type="GO" id="GO:0005886">
    <property type="term" value="C:plasma membrane"/>
    <property type="evidence" value="ECO:0007669"/>
    <property type="project" value="UniProtKB-SubCell"/>
</dbReference>
<dbReference type="GO" id="GO:0050839">
    <property type="term" value="F:cell adhesion molecule binding"/>
    <property type="evidence" value="ECO:0007669"/>
    <property type="project" value="TreeGrafter"/>
</dbReference>
<dbReference type="GO" id="GO:0007155">
    <property type="term" value="P:cell adhesion"/>
    <property type="evidence" value="ECO:0007669"/>
    <property type="project" value="TreeGrafter"/>
</dbReference>
<dbReference type="GO" id="GO:0030198">
    <property type="term" value="P:extracellular matrix organization"/>
    <property type="evidence" value="ECO:0007669"/>
    <property type="project" value="TreeGrafter"/>
</dbReference>
<dbReference type="FunFam" id="2.30.180.10:FF:000019">
    <property type="entry name" value="Cell surface lipoprotein"/>
    <property type="match status" value="1"/>
</dbReference>
<dbReference type="Gene3D" id="2.30.180.10">
    <property type="entry name" value="FAS1 domain"/>
    <property type="match status" value="1"/>
</dbReference>
<dbReference type="InterPro" id="IPR050904">
    <property type="entry name" value="Adhesion/Biosynth-related"/>
</dbReference>
<dbReference type="InterPro" id="IPR036378">
    <property type="entry name" value="FAS1_dom_sf"/>
</dbReference>
<dbReference type="InterPro" id="IPR000782">
    <property type="entry name" value="FAS1_domain"/>
</dbReference>
<dbReference type="PANTHER" id="PTHR10900:SF77">
    <property type="entry name" value="FI19380P1"/>
    <property type="match status" value="1"/>
</dbReference>
<dbReference type="PANTHER" id="PTHR10900">
    <property type="entry name" value="PERIOSTIN-RELATED"/>
    <property type="match status" value="1"/>
</dbReference>
<dbReference type="Pfam" id="PF02469">
    <property type="entry name" value="Fasciclin"/>
    <property type="match status" value="1"/>
</dbReference>
<dbReference type="SMART" id="SM00554">
    <property type="entry name" value="FAS1"/>
    <property type="match status" value="1"/>
</dbReference>
<dbReference type="SUPFAM" id="SSF82153">
    <property type="entry name" value="FAS1 domain"/>
    <property type="match status" value="1"/>
</dbReference>
<dbReference type="PROSITE" id="PS50213">
    <property type="entry name" value="FAS1"/>
    <property type="match status" value="1"/>
</dbReference>
<dbReference type="PROSITE" id="PS51257">
    <property type="entry name" value="PROKAR_LIPOPROTEIN"/>
    <property type="match status" value="1"/>
</dbReference>